<accession>Q99704</accession>
<accession>O43204</accession>
<accession>Q53TY2</accession>
<accession>Q9UHG6</accession>
<gene>
    <name type="primary">DOK1</name>
</gene>
<keyword id="KW-0002">3D-structure</keyword>
<keyword id="KW-0007">Acetylation</keyword>
<keyword id="KW-0024">Alternative initiation</keyword>
<keyword id="KW-0025">Alternative splicing</keyword>
<keyword id="KW-0963">Cytoplasm</keyword>
<keyword id="KW-0539">Nucleus</keyword>
<keyword id="KW-0597">Phosphoprotein</keyword>
<keyword id="KW-1267">Proteomics identification</keyword>
<keyword id="KW-1185">Reference proteome</keyword>
<reference key="1">
    <citation type="journal article" date="1997" name="Cell">
        <title>p62(dok): a constitutively tyrosine-phosphorylated, GAP-associated protein in chronic myelogenous leukemia progenitor cells.</title>
        <authorList>
            <person name="Carpino N."/>
            <person name="Wisniewski D."/>
            <person name="Strife A."/>
            <person name="Marshak D."/>
            <person name="Kobayashi R."/>
            <person name="Stillman B."/>
            <person name="Clarkson B."/>
        </authorList>
    </citation>
    <scope>NUCLEOTIDE SEQUENCE [MRNA] (ISOFORM 1)</scope>
    <scope>PHOSPHORYLATION AT TYROSINE RESIDUES</scope>
</reference>
<reference key="2">
    <citation type="journal article" date="2000" name="Eur. J. Immunogenet.">
        <title>Molecular cloning of a truncated p62Dok1 isoform, p22Dokdel.</title>
        <authorList>
            <person name="Hubert P."/>
            <person name="Ferreira V."/>
            <person name="Debre P."/>
            <person name="Bismuth G."/>
        </authorList>
    </citation>
    <scope>NUCLEOTIDE SEQUENCE [MRNA] (ISOFORM 2)</scope>
</reference>
<reference key="3">
    <citation type="submission" date="1997-11" db="EMBL/GenBank/DDBJ databases">
        <authorList>
            <person name="Yu W."/>
            <person name="Sarginson J."/>
            <person name="Gibbs R.A."/>
        </authorList>
    </citation>
    <scope>NUCLEOTIDE SEQUENCE [LARGE SCALE MRNA] (ISOFORM 1)</scope>
    <source>
        <tissue>Brain</tissue>
    </source>
</reference>
<reference key="4">
    <citation type="journal article" date="2005" name="Nature">
        <title>Generation and annotation of the DNA sequences of human chromosomes 2 and 4.</title>
        <authorList>
            <person name="Hillier L.W."/>
            <person name="Graves T.A."/>
            <person name="Fulton R.S."/>
            <person name="Fulton L.A."/>
            <person name="Pepin K.H."/>
            <person name="Minx P."/>
            <person name="Wagner-McPherson C."/>
            <person name="Layman D."/>
            <person name="Wylie K."/>
            <person name="Sekhon M."/>
            <person name="Becker M.C."/>
            <person name="Fewell G.A."/>
            <person name="Delehaunty K.D."/>
            <person name="Miner T.L."/>
            <person name="Nash W.E."/>
            <person name="Kremitzki C."/>
            <person name="Oddy L."/>
            <person name="Du H."/>
            <person name="Sun H."/>
            <person name="Bradshaw-Cordum H."/>
            <person name="Ali J."/>
            <person name="Carter J."/>
            <person name="Cordes M."/>
            <person name="Harris A."/>
            <person name="Isak A."/>
            <person name="van Brunt A."/>
            <person name="Nguyen C."/>
            <person name="Du F."/>
            <person name="Courtney L."/>
            <person name="Kalicki J."/>
            <person name="Ozersky P."/>
            <person name="Abbott S."/>
            <person name="Armstrong J."/>
            <person name="Belter E.A."/>
            <person name="Caruso L."/>
            <person name="Cedroni M."/>
            <person name="Cotton M."/>
            <person name="Davidson T."/>
            <person name="Desai A."/>
            <person name="Elliott G."/>
            <person name="Erb T."/>
            <person name="Fronick C."/>
            <person name="Gaige T."/>
            <person name="Haakenson W."/>
            <person name="Haglund K."/>
            <person name="Holmes A."/>
            <person name="Harkins R."/>
            <person name="Kim K."/>
            <person name="Kruchowski S.S."/>
            <person name="Strong C.M."/>
            <person name="Grewal N."/>
            <person name="Goyea E."/>
            <person name="Hou S."/>
            <person name="Levy A."/>
            <person name="Martinka S."/>
            <person name="Mead K."/>
            <person name="McLellan M.D."/>
            <person name="Meyer R."/>
            <person name="Randall-Maher J."/>
            <person name="Tomlinson C."/>
            <person name="Dauphin-Kohlberg S."/>
            <person name="Kozlowicz-Reilly A."/>
            <person name="Shah N."/>
            <person name="Swearengen-Shahid S."/>
            <person name="Snider J."/>
            <person name="Strong J.T."/>
            <person name="Thompson J."/>
            <person name="Yoakum M."/>
            <person name="Leonard S."/>
            <person name="Pearman C."/>
            <person name="Trani L."/>
            <person name="Radionenko M."/>
            <person name="Waligorski J.E."/>
            <person name="Wang C."/>
            <person name="Rock S.M."/>
            <person name="Tin-Wollam A.-M."/>
            <person name="Maupin R."/>
            <person name="Latreille P."/>
            <person name="Wendl M.C."/>
            <person name="Yang S.-P."/>
            <person name="Pohl C."/>
            <person name="Wallis J.W."/>
            <person name="Spieth J."/>
            <person name="Bieri T.A."/>
            <person name="Berkowicz N."/>
            <person name="Nelson J.O."/>
            <person name="Osborne J."/>
            <person name="Ding L."/>
            <person name="Meyer R."/>
            <person name="Sabo A."/>
            <person name="Shotland Y."/>
            <person name="Sinha P."/>
            <person name="Wohldmann P.E."/>
            <person name="Cook L.L."/>
            <person name="Hickenbotham M.T."/>
            <person name="Eldred J."/>
            <person name="Williams D."/>
            <person name="Jones T.A."/>
            <person name="She X."/>
            <person name="Ciccarelli F.D."/>
            <person name="Izaurralde E."/>
            <person name="Taylor J."/>
            <person name="Schmutz J."/>
            <person name="Myers R.M."/>
            <person name="Cox D.R."/>
            <person name="Huang X."/>
            <person name="McPherson J.D."/>
            <person name="Mardis E.R."/>
            <person name="Clifton S.W."/>
            <person name="Warren W.C."/>
            <person name="Chinwalla A.T."/>
            <person name="Eddy S.R."/>
            <person name="Marra M.A."/>
            <person name="Ovcharenko I."/>
            <person name="Furey T.S."/>
            <person name="Miller W."/>
            <person name="Eichler E.E."/>
            <person name="Bork P."/>
            <person name="Suyama M."/>
            <person name="Torrents D."/>
            <person name="Waterston R.H."/>
            <person name="Wilson R.K."/>
        </authorList>
    </citation>
    <scope>NUCLEOTIDE SEQUENCE [LARGE SCALE GENOMIC DNA]</scope>
</reference>
<reference key="5">
    <citation type="journal article" date="2004" name="Genome Res.">
        <title>The status, quality, and expansion of the NIH full-length cDNA project: the Mammalian Gene Collection (MGC).</title>
        <authorList>
            <consortium name="The MGC Project Team"/>
        </authorList>
    </citation>
    <scope>NUCLEOTIDE SEQUENCE [LARGE SCALE MRNA] (ISOFORM 1)</scope>
</reference>
<reference key="6">
    <citation type="journal article" date="2001" name="J. Biol. Chem.">
        <title>Insulin receptor-mediated p62dok tyrosine phosphorylation at residues 362 and 398 plays distinct roles for binding GTPase-activating protein and Nck and is essential for inhibiting insulin-stimulated activation of Ras and Akt.</title>
        <authorList>
            <person name="Wick M.J."/>
            <person name="Dong L.Q."/>
            <person name="Hu D."/>
            <person name="Langlais P."/>
            <person name="Liu F."/>
        </authorList>
    </citation>
    <scope>PHOSPHORYLATION AT TYR-362 AND TYR-398</scope>
    <scope>MUTAGENESIS OF TYR-362 AND TYR-398</scope>
</reference>
<reference key="7">
    <citation type="journal article" date="2003" name="Genes Immun.">
        <title>DOK4 and DOK5: new Dok-related genes expressed in human T cells.</title>
        <authorList>
            <person name="Favre C."/>
            <person name="Gerard A."/>
            <person name="Clauzier E."/>
            <person name="Pontarotti P."/>
            <person name="Olive D."/>
            <person name="Nunes J.A."/>
        </authorList>
    </citation>
    <scope>TISSUE SPECIFICITY</scope>
</reference>
<reference key="8">
    <citation type="journal article" date="2005" name="Nat. Biotechnol.">
        <title>Immunoaffinity profiling of tyrosine phosphorylation in cancer cells.</title>
        <authorList>
            <person name="Rush J."/>
            <person name="Moritz A."/>
            <person name="Lee K.A."/>
            <person name="Guo A."/>
            <person name="Goss V.L."/>
            <person name="Spek E.J."/>
            <person name="Zhang H."/>
            <person name="Zha X.-M."/>
            <person name="Polakiewicz R.D."/>
            <person name="Comb M.J."/>
        </authorList>
    </citation>
    <scope>PHOSPHORYLATION [LARGE SCALE ANALYSIS] AT TYR-362; TYR-377; TYR-398 AND TYR-409</scope>
    <scope>IDENTIFICATION BY MASS SPECTROMETRY [LARGE SCALE ANALYSIS]</scope>
</reference>
<reference key="9">
    <citation type="journal article" date="2008" name="J. Proteome Res.">
        <title>Phosphoproteome of resting human platelets.</title>
        <authorList>
            <person name="Zahedi R.P."/>
            <person name="Lewandrowski U."/>
            <person name="Wiesner J."/>
            <person name="Wortelkamp S."/>
            <person name="Moebius J."/>
            <person name="Schuetz C."/>
            <person name="Walter U."/>
            <person name="Gambaryan S."/>
            <person name="Sickmann A."/>
        </authorList>
    </citation>
    <scope>PHOSPHORYLATION [LARGE SCALE ANALYSIS] AT SER-269</scope>
    <scope>IDENTIFICATION BY MASS SPECTROMETRY [LARGE SCALE ANALYSIS]</scope>
    <source>
        <tissue>Platelet</tissue>
    </source>
</reference>
<reference key="10">
    <citation type="journal article" date="2008" name="Proc. Natl. Acad. Sci. U.S.A.">
        <title>A quantitative atlas of mitotic phosphorylation.</title>
        <authorList>
            <person name="Dephoure N."/>
            <person name="Zhou C."/>
            <person name="Villen J."/>
            <person name="Beausoleil S.A."/>
            <person name="Bakalarski C.E."/>
            <person name="Elledge S.J."/>
            <person name="Gygi S.P."/>
        </authorList>
    </citation>
    <scope>PHOSPHORYLATION [LARGE SCALE ANALYSIS] AT SER-291</scope>
    <scope>IDENTIFICATION BY MASS SPECTROMETRY [LARGE SCALE ANALYSIS]</scope>
    <source>
        <tissue>Cervix carcinoma</tissue>
    </source>
</reference>
<reference key="11">
    <citation type="journal article" date="2009" name="FEBS Lett.">
        <title>Targeted mass spectrometric analysis of N-terminally truncated isoforms generated via alternative translation initiation.</title>
        <authorList>
            <person name="Kobayashi R."/>
            <person name="Patenia R."/>
            <person name="Ashizawa S."/>
            <person name="Vykoukal J."/>
        </authorList>
    </citation>
    <scope>SUBCELLULAR LOCATION</scope>
    <scope>ALTERNATIVE INITIATION (ISOFORM 3)</scope>
    <scope>ACETYLATION AT MET-1 (ISOFORM 3)</scope>
</reference>
<reference key="12">
    <citation type="journal article" date="2009" name="Sci. Signal.">
        <title>Quantitative phosphoproteomic analysis of T cell receptor signaling reveals system-wide modulation of protein-protein interactions.</title>
        <authorList>
            <person name="Mayya V."/>
            <person name="Lundgren D.H."/>
            <person name="Hwang S.-I."/>
            <person name="Rezaul K."/>
            <person name="Wu L."/>
            <person name="Eng J.K."/>
            <person name="Rodionov V."/>
            <person name="Han D.K."/>
        </authorList>
    </citation>
    <scope>PHOSPHORYLATION [LARGE SCALE ANALYSIS] AT SER-269; TYR-341 AND TYR-362</scope>
    <scope>IDENTIFICATION BY MASS SPECTROMETRY [LARGE SCALE ANALYSIS]</scope>
    <source>
        <tissue>Leukemic T-cell</tissue>
    </source>
</reference>
<reference key="13">
    <citation type="journal article" date="2012" name="Proc. Natl. Acad. Sci. U.S.A.">
        <title>N-terminal acetylome analyses and functional insights of the N-terminal acetyltransferase NatB.</title>
        <authorList>
            <person name="Van Damme P."/>
            <person name="Lasa M."/>
            <person name="Polevoda B."/>
            <person name="Gazquez C."/>
            <person name="Elosegui-Artola A."/>
            <person name="Kim D.S."/>
            <person name="De Juan-Pardo E."/>
            <person name="Demeyer K."/>
            <person name="Hole K."/>
            <person name="Larrea E."/>
            <person name="Timmerman E."/>
            <person name="Prieto J."/>
            <person name="Arnesen T."/>
            <person name="Sherman F."/>
            <person name="Gevaert K."/>
            <person name="Aldabe R."/>
        </authorList>
    </citation>
    <scope>ACETYLATION [LARGE SCALE ANALYSIS] AT MET-1</scope>
    <scope>IDENTIFICATION BY MASS SPECTROMETRY [LARGE SCALE ANALYSIS]</scope>
</reference>
<reference key="14">
    <citation type="journal article" date="2013" name="FEBS J.">
        <title>The unique N-terminal region of SRMS regulates enzymatic activity and phosphorylation of its novel substrate Dok1.</title>
        <authorList>
            <person name="Goel R.K."/>
            <person name="Miah S."/>
            <person name="Black K."/>
            <person name="Kalra N."/>
            <person name="Dai C."/>
            <person name="Lukong K.E."/>
        </authorList>
    </citation>
    <scope>PHOSPHORYLATION</scope>
    <scope>SUBCELLULAR LOCATION</scope>
    <scope>INTERACTION WITH SRMS</scope>
</reference>
<reference key="15">
    <citation type="journal article" date="2013" name="J. Proteome Res.">
        <title>Toward a comprehensive characterization of a human cancer cell phosphoproteome.</title>
        <authorList>
            <person name="Zhou H."/>
            <person name="Di Palma S."/>
            <person name="Preisinger C."/>
            <person name="Peng M."/>
            <person name="Polat A.N."/>
            <person name="Heck A.J."/>
            <person name="Mohammed S."/>
        </authorList>
    </citation>
    <scope>PHOSPHORYLATION [LARGE SCALE ANALYSIS] AT SER-48; SER-269 AND SER-460</scope>
    <scope>IDENTIFICATION BY MASS SPECTROMETRY [LARGE SCALE ANALYSIS]</scope>
    <source>
        <tissue>Erythroleukemia</tissue>
    </source>
</reference>
<reference key="16">
    <citation type="journal article" date="2008" name="J. Biol. Chem.">
        <title>An integrin phosphorylation switch: the effect of beta3 integrin tail phosphorylation on Dok1 and talin binding.</title>
        <authorList>
            <person name="Oxley C.L."/>
            <person name="Anthis N.J."/>
            <person name="Lowe E.D."/>
            <person name="Vakonakis I."/>
            <person name="Campbell I.D."/>
            <person name="Wegener K.L."/>
        </authorList>
    </citation>
    <scope>X-RAY CRYSTALLOGRAPHY (1.6 ANGSTROMS) OF 152-256</scope>
    <scope>FUNCTION</scope>
    <scope>INTERACTION WITH ITGB3</scope>
</reference>
<sequence length="481" mass="52392">MDGAVMEGPLFLQSQRFGTKRWRKTWAVLYPASPHGVARLEFFDHKGSSSGGGRGSSRRLDCKVIRLAECVSVAPVTVETPPEPGATAFRLDTAQRSHLLAADAPSSAAWVQTLCRNAFPKGSWTLAPTDNPPKLSALEMLENSLYSPTWEGSQFWVTVQRTEAAERCGLHGSYVLRVEAERLTLLTVGAQSQILEPLLSWPYTLLRRYGRDKVMFSFEAGRRCPSGPGTFTFQTAQGNDIFQAVETAIHRQKAQGKAGQGHDVLRADSHEGEVAEGKLPSPPGPQELLDSPPALYAEPLDSLRIAPCPSQDSLYSDPLDSTSAQAGEGVQRKKPLYWDLYEHAQQQLLKAKLTDPKEDPIYDEPEGLAPVPPQGLYDLPREPKDAWWCQARVKEEGYELPYNPATDDYAVPPPRSTKPLLAPKPQGPAFPEPGTATGSGIKSHNSALYSQVQKSGASGSWDCGLSRVGTDKTGVKSEGST</sequence>
<evidence type="ECO:0000250" key="1"/>
<evidence type="ECO:0000250" key="2">
    <source>
        <dbReference type="UniProtKB" id="P97465"/>
    </source>
</evidence>
<evidence type="ECO:0000255" key="3">
    <source>
        <dbReference type="PROSITE-ProRule" id="PRU00389"/>
    </source>
</evidence>
<evidence type="ECO:0000256" key="4">
    <source>
        <dbReference type="SAM" id="MobiDB-lite"/>
    </source>
</evidence>
<evidence type="ECO:0000269" key="5">
    <source>
    </source>
</evidence>
<evidence type="ECO:0000269" key="6">
    <source>
    </source>
</evidence>
<evidence type="ECO:0000269" key="7">
    <source>
    </source>
</evidence>
<evidence type="ECO:0000269" key="8">
    <source>
    </source>
</evidence>
<evidence type="ECO:0000269" key="9">
    <source>
    </source>
</evidence>
<evidence type="ECO:0000269" key="10">
    <source>
    </source>
</evidence>
<evidence type="ECO:0000303" key="11">
    <source>
    </source>
</evidence>
<evidence type="ECO:0000305" key="12"/>
<evidence type="ECO:0007744" key="13">
    <source>
    </source>
</evidence>
<evidence type="ECO:0007744" key="14">
    <source>
    </source>
</evidence>
<evidence type="ECO:0007744" key="15">
    <source>
    </source>
</evidence>
<evidence type="ECO:0007744" key="16">
    <source>
    </source>
</evidence>
<evidence type="ECO:0007744" key="17">
    <source>
    </source>
</evidence>
<evidence type="ECO:0007744" key="18">
    <source>
    </source>
</evidence>
<evidence type="ECO:0007829" key="19">
    <source>
        <dbReference type="PDB" id="2V76"/>
    </source>
</evidence>
<organism>
    <name type="scientific">Homo sapiens</name>
    <name type="common">Human</name>
    <dbReference type="NCBI Taxonomy" id="9606"/>
    <lineage>
        <taxon>Eukaryota</taxon>
        <taxon>Metazoa</taxon>
        <taxon>Chordata</taxon>
        <taxon>Craniata</taxon>
        <taxon>Vertebrata</taxon>
        <taxon>Euteleostomi</taxon>
        <taxon>Mammalia</taxon>
        <taxon>Eutheria</taxon>
        <taxon>Euarchontoglires</taxon>
        <taxon>Primates</taxon>
        <taxon>Haplorrhini</taxon>
        <taxon>Catarrhini</taxon>
        <taxon>Hominidae</taxon>
        <taxon>Homo</taxon>
    </lineage>
</organism>
<dbReference type="EMBL" id="U70987">
    <property type="protein sequence ID" value="AAC51127.1"/>
    <property type="molecule type" value="mRNA"/>
</dbReference>
<dbReference type="EMBL" id="AF180527">
    <property type="protein sequence ID" value="AAF19167.1"/>
    <property type="molecule type" value="mRNA"/>
</dbReference>
<dbReference type="EMBL" id="AF035299">
    <property type="protein sequence ID" value="AAB88182.1"/>
    <property type="molecule type" value="mRNA"/>
</dbReference>
<dbReference type="EMBL" id="AC005033">
    <property type="protein sequence ID" value="AAX93224.1"/>
    <property type="molecule type" value="Genomic_DNA"/>
</dbReference>
<dbReference type="EMBL" id="BC114440">
    <property type="protein sequence ID" value="AAI14441.1"/>
    <property type="molecule type" value="mRNA"/>
</dbReference>
<dbReference type="CCDS" id="CCDS1954.1">
    <molecule id="Q99704-1"/>
</dbReference>
<dbReference type="CCDS" id="CCDS56125.1">
    <molecule id="Q99704-3"/>
</dbReference>
<dbReference type="CCDS" id="CCDS82474.1">
    <molecule id="Q99704-2"/>
</dbReference>
<dbReference type="RefSeq" id="NP_001184189.1">
    <molecule id="Q99704-3"/>
    <property type="nucleotide sequence ID" value="NM_001197260.2"/>
</dbReference>
<dbReference type="RefSeq" id="NP_001305795.1">
    <molecule id="Q99704-3"/>
    <property type="nucleotide sequence ID" value="NM_001318866.2"/>
</dbReference>
<dbReference type="RefSeq" id="NP_001305797.1">
    <molecule id="Q99704-2"/>
    <property type="nucleotide sequence ID" value="NM_001318868.2"/>
</dbReference>
<dbReference type="RefSeq" id="NP_001372.1">
    <molecule id="Q99704-1"/>
    <property type="nucleotide sequence ID" value="NM_001381.5"/>
</dbReference>
<dbReference type="PDB" id="2V76">
    <property type="method" value="X-ray"/>
    <property type="resolution" value="1.60 A"/>
    <property type="chains" value="A/B/C/D=152-256"/>
</dbReference>
<dbReference type="PDBsum" id="2V76"/>
<dbReference type="BMRB" id="Q99704"/>
<dbReference type="SASBDB" id="Q99704"/>
<dbReference type="SMR" id="Q99704"/>
<dbReference type="BioGRID" id="108131">
    <property type="interactions" value="43"/>
</dbReference>
<dbReference type="ELM" id="Q99704"/>
<dbReference type="FunCoup" id="Q99704">
    <property type="interactions" value="1701"/>
</dbReference>
<dbReference type="IntAct" id="Q99704">
    <property type="interactions" value="30"/>
</dbReference>
<dbReference type="MINT" id="Q99704"/>
<dbReference type="STRING" id="9606.ENSP00000233668"/>
<dbReference type="iPTMnet" id="Q99704"/>
<dbReference type="PhosphoSitePlus" id="Q99704"/>
<dbReference type="BioMuta" id="DOK1"/>
<dbReference type="DMDM" id="17366642"/>
<dbReference type="jPOST" id="Q99704"/>
<dbReference type="MassIVE" id="Q99704"/>
<dbReference type="PaxDb" id="9606-ENSP00000233668"/>
<dbReference type="PeptideAtlas" id="Q99704"/>
<dbReference type="ProteomicsDB" id="78413">
    <molecule id="Q99704-1"/>
</dbReference>
<dbReference type="ProteomicsDB" id="78414">
    <molecule id="Q99704-2"/>
</dbReference>
<dbReference type="ProteomicsDB" id="78415">
    <molecule id="Q99704-3"/>
</dbReference>
<dbReference type="Pumba" id="Q99704"/>
<dbReference type="Antibodypedia" id="3784">
    <property type="antibodies" value="880 antibodies from 42 providers"/>
</dbReference>
<dbReference type="DNASU" id="1796"/>
<dbReference type="Ensembl" id="ENST00000233668.10">
    <molecule id="Q99704-1"/>
    <property type="protein sequence ID" value="ENSP00000233668.5"/>
    <property type="gene ID" value="ENSG00000115325.14"/>
</dbReference>
<dbReference type="Ensembl" id="ENST00000340004.6">
    <molecule id="Q99704-2"/>
    <property type="protein sequence ID" value="ENSP00000344330.6"/>
    <property type="gene ID" value="ENSG00000115325.14"/>
</dbReference>
<dbReference type="Ensembl" id="ENST00000409429.5">
    <molecule id="Q99704-3"/>
    <property type="protein sequence ID" value="ENSP00000387016.1"/>
    <property type="gene ID" value="ENSG00000115325.14"/>
</dbReference>
<dbReference type="GeneID" id="1796"/>
<dbReference type="KEGG" id="hsa:1796"/>
<dbReference type="MANE-Select" id="ENST00000233668.10">
    <property type="protein sequence ID" value="ENSP00000233668.5"/>
    <property type="RefSeq nucleotide sequence ID" value="NM_001381.5"/>
    <property type="RefSeq protein sequence ID" value="NP_001372.1"/>
</dbReference>
<dbReference type="UCSC" id="uc002smr.4">
    <molecule id="Q99704-1"/>
    <property type="organism name" value="human"/>
</dbReference>
<dbReference type="AGR" id="HGNC:2990"/>
<dbReference type="CTD" id="1796"/>
<dbReference type="DisGeNET" id="1796"/>
<dbReference type="GeneCards" id="DOK1"/>
<dbReference type="HGNC" id="HGNC:2990">
    <property type="gene designation" value="DOK1"/>
</dbReference>
<dbReference type="HPA" id="ENSG00000115325">
    <property type="expression patterns" value="Low tissue specificity"/>
</dbReference>
<dbReference type="MalaCards" id="DOK1"/>
<dbReference type="MIM" id="602919">
    <property type="type" value="gene"/>
</dbReference>
<dbReference type="neXtProt" id="NX_Q99704"/>
<dbReference type="OpenTargets" id="ENSG00000115325"/>
<dbReference type="PharmGKB" id="PA27456"/>
<dbReference type="VEuPathDB" id="HostDB:ENSG00000115325"/>
<dbReference type="eggNOG" id="KOG4047">
    <property type="taxonomic scope" value="Eukaryota"/>
</dbReference>
<dbReference type="GeneTree" id="ENSGT00940000155980"/>
<dbReference type="HOGENOM" id="CLU_056741_0_0_1"/>
<dbReference type="InParanoid" id="Q99704"/>
<dbReference type="OMA" id="EFFDCKE"/>
<dbReference type="OrthoDB" id="6243387at2759"/>
<dbReference type="PAN-GO" id="Q99704">
    <property type="GO annotations" value="3 GO annotations based on evolutionary models"/>
</dbReference>
<dbReference type="PhylomeDB" id="Q99704"/>
<dbReference type="TreeFam" id="TF324994"/>
<dbReference type="PathwayCommons" id="Q99704"/>
<dbReference type="Reactome" id="R-HSA-8849469">
    <property type="pathway name" value="PTK6 Regulates RTKs and Their Effectors AKT1 and DOK1"/>
</dbReference>
<dbReference type="Reactome" id="R-HSA-8853659">
    <property type="pathway name" value="RET signaling"/>
</dbReference>
<dbReference type="SignaLink" id="Q99704"/>
<dbReference type="SIGNOR" id="Q99704"/>
<dbReference type="BioGRID-ORCS" id="1796">
    <property type="hits" value="8 hits in 1158 CRISPR screens"/>
</dbReference>
<dbReference type="ChiTaRS" id="DOK1">
    <property type="organism name" value="human"/>
</dbReference>
<dbReference type="EvolutionaryTrace" id="Q99704"/>
<dbReference type="GeneWiki" id="DOK1"/>
<dbReference type="GenomeRNAi" id="1796"/>
<dbReference type="Pharos" id="Q99704">
    <property type="development level" value="Tbio"/>
</dbReference>
<dbReference type="PRO" id="PR:Q99704"/>
<dbReference type="Proteomes" id="UP000005640">
    <property type="component" value="Chromosome 2"/>
</dbReference>
<dbReference type="RNAct" id="Q99704">
    <property type="molecule type" value="protein"/>
</dbReference>
<dbReference type="Bgee" id="ENSG00000115325">
    <property type="expression patterns" value="Expressed in tendon of biceps brachii and 205 other cell types or tissues"/>
</dbReference>
<dbReference type="ExpressionAtlas" id="Q99704">
    <property type="expression patterns" value="baseline and differential"/>
</dbReference>
<dbReference type="GO" id="GO:0005737">
    <property type="term" value="C:cytoplasm"/>
    <property type="evidence" value="ECO:0000318"/>
    <property type="project" value="GO_Central"/>
</dbReference>
<dbReference type="GO" id="GO:0005829">
    <property type="term" value="C:cytosol"/>
    <property type="evidence" value="ECO:0000314"/>
    <property type="project" value="HPA"/>
</dbReference>
<dbReference type="GO" id="GO:0005634">
    <property type="term" value="C:nucleus"/>
    <property type="evidence" value="ECO:0000314"/>
    <property type="project" value="UniProtKB"/>
</dbReference>
<dbReference type="GO" id="GO:0048471">
    <property type="term" value="C:perinuclear region of cytoplasm"/>
    <property type="evidence" value="ECO:0007669"/>
    <property type="project" value="UniProtKB-SubCell"/>
</dbReference>
<dbReference type="GO" id="GO:0007169">
    <property type="term" value="P:cell surface receptor protein tyrosine kinase signaling pathway"/>
    <property type="evidence" value="ECO:0000318"/>
    <property type="project" value="GO_Central"/>
</dbReference>
<dbReference type="GO" id="GO:0007166">
    <property type="term" value="P:cell surface receptor signaling pathway"/>
    <property type="evidence" value="ECO:0000304"/>
    <property type="project" value="ProtInc"/>
</dbReference>
<dbReference type="GO" id="GO:0038145">
    <property type="term" value="P:macrophage colony-stimulating factor signaling pathway"/>
    <property type="evidence" value="ECO:0007669"/>
    <property type="project" value="Ensembl"/>
</dbReference>
<dbReference type="GO" id="GO:0007265">
    <property type="term" value="P:Ras protein signal transduction"/>
    <property type="evidence" value="ECO:0000318"/>
    <property type="project" value="GO_Central"/>
</dbReference>
<dbReference type="GO" id="GO:0007165">
    <property type="term" value="P:signal transduction"/>
    <property type="evidence" value="ECO:0000304"/>
    <property type="project" value="ProtInc"/>
</dbReference>
<dbReference type="CDD" id="cd01203">
    <property type="entry name" value="PTB_DOK1_DOK2_DOK3"/>
    <property type="match status" value="1"/>
</dbReference>
<dbReference type="FunFam" id="2.30.29.30:FF:000246">
    <property type="entry name" value="Docking protein 1"/>
    <property type="match status" value="1"/>
</dbReference>
<dbReference type="FunFam" id="2.30.29.30:FF:000400">
    <property type="entry name" value="docking protein 1 isoform X1"/>
    <property type="match status" value="1"/>
</dbReference>
<dbReference type="Gene3D" id="2.30.29.30">
    <property type="entry name" value="Pleckstrin-homology domain (PH domain)/Phosphotyrosine-binding domain (PTB)"/>
    <property type="match status" value="2"/>
</dbReference>
<dbReference type="InterPro" id="IPR050996">
    <property type="entry name" value="Docking_Protein_DOK"/>
</dbReference>
<dbReference type="InterPro" id="IPR037751">
    <property type="entry name" value="Dok1/2/3_PTB"/>
</dbReference>
<dbReference type="InterPro" id="IPR002404">
    <property type="entry name" value="IRS_PTB"/>
</dbReference>
<dbReference type="InterPro" id="IPR011993">
    <property type="entry name" value="PH-like_dom_sf"/>
</dbReference>
<dbReference type="InterPro" id="IPR001849">
    <property type="entry name" value="PH_domain"/>
</dbReference>
<dbReference type="PANTHER" id="PTHR21258:SF46">
    <property type="entry name" value="DOCKING PROTEIN 1"/>
    <property type="match status" value="1"/>
</dbReference>
<dbReference type="PANTHER" id="PTHR21258">
    <property type="entry name" value="DOCKING PROTEIN RELATED"/>
    <property type="match status" value="1"/>
</dbReference>
<dbReference type="Pfam" id="PF02174">
    <property type="entry name" value="IRS"/>
    <property type="match status" value="1"/>
</dbReference>
<dbReference type="Pfam" id="PF00169">
    <property type="entry name" value="PH"/>
    <property type="match status" value="1"/>
</dbReference>
<dbReference type="SMART" id="SM01244">
    <property type="entry name" value="IRS"/>
    <property type="match status" value="1"/>
</dbReference>
<dbReference type="SMART" id="SM00233">
    <property type="entry name" value="PH"/>
    <property type="match status" value="1"/>
</dbReference>
<dbReference type="SMART" id="SM00310">
    <property type="entry name" value="PTBI"/>
    <property type="match status" value="1"/>
</dbReference>
<dbReference type="SUPFAM" id="SSF50729">
    <property type="entry name" value="PH domain-like"/>
    <property type="match status" value="2"/>
</dbReference>
<dbReference type="PROSITE" id="PS51064">
    <property type="entry name" value="IRS_PTB"/>
    <property type="match status" value="1"/>
</dbReference>
<proteinExistence type="evidence at protein level"/>
<protein>
    <recommendedName>
        <fullName>Docking protein 1</fullName>
    </recommendedName>
    <alternativeName>
        <fullName>Downstream of tyrosine kinase 1</fullName>
    </alternativeName>
    <alternativeName>
        <fullName>p62(dok)</fullName>
    </alternativeName>
    <alternativeName>
        <fullName>pp62</fullName>
    </alternativeName>
</protein>
<name>DOK1_HUMAN</name>
<feature type="chain" id="PRO_0000187268" description="Docking protein 1">
    <location>
        <begin position="1"/>
        <end position="481"/>
    </location>
</feature>
<feature type="domain" description="PH">
    <location>
        <begin position="4"/>
        <end position="119"/>
    </location>
</feature>
<feature type="domain" description="IRS-type PTB" evidence="3">
    <location>
        <begin position="151"/>
        <end position="259"/>
    </location>
</feature>
<feature type="region of interest" description="Disordered" evidence="4">
    <location>
        <begin position="270"/>
        <end position="293"/>
    </location>
</feature>
<feature type="region of interest" description="Disordered" evidence="4">
    <location>
        <begin position="307"/>
        <end position="329"/>
    </location>
</feature>
<feature type="region of interest" description="Disordered" evidence="4">
    <location>
        <begin position="404"/>
        <end position="481"/>
    </location>
</feature>
<feature type="compositionally biased region" description="Polar residues" evidence="4">
    <location>
        <begin position="310"/>
        <end position="325"/>
    </location>
</feature>
<feature type="compositionally biased region" description="Polar residues" evidence="4">
    <location>
        <begin position="436"/>
        <end position="458"/>
    </location>
</feature>
<feature type="modified residue" description="N-acetylmethionine" evidence="17">
    <location>
        <position position="1"/>
    </location>
</feature>
<feature type="modified residue" description="Phosphoserine" evidence="18">
    <location>
        <position position="48"/>
    </location>
</feature>
<feature type="modified residue" description="Phosphoserine" evidence="14 16 18">
    <location>
        <position position="269"/>
    </location>
</feature>
<feature type="modified residue" description="Phosphoserine" evidence="15">
    <location>
        <position position="291"/>
    </location>
</feature>
<feature type="modified residue" description="Phosphotyrosine" evidence="2">
    <location>
        <position position="296"/>
    </location>
</feature>
<feature type="modified residue" description="Phosphotyrosine" evidence="2">
    <location>
        <position position="337"/>
    </location>
</feature>
<feature type="modified residue" description="Phosphotyrosine" evidence="16">
    <location>
        <position position="341"/>
    </location>
</feature>
<feature type="modified residue" description="Phosphotyrosine; by INSR" evidence="5 13 16">
    <location>
        <position position="362"/>
    </location>
</feature>
<feature type="modified residue" description="Phosphotyrosine" evidence="13">
    <location>
        <position position="377"/>
    </location>
</feature>
<feature type="modified residue" description="Phosphotyrosine; by INSR" evidence="5 13">
    <location>
        <position position="398"/>
    </location>
</feature>
<feature type="modified residue" description="Phosphotyrosine" evidence="13">
    <location>
        <position position="409"/>
    </location>
</feature>
<feature type="modified residue" description="Phosphoserine" evidence="2">
    <location>
        <position position="416"/>
    </location>
</feature>
<feature type="modified residue" description="Phosphotyrosine" evidence="2">
    <location>
        <position position="449"/>
    </location>
</feature>
<feature type="modified residue" description="Phosphoserine" evidence="18">
    <location>
        <position position="460"/>
    </location>
</feature>
<feature type="splice variant" id="VSP_038224" description="In isoform 3." evidence="12">
    <location>
        <begin position="1"/>
        <end position="139"/>
    </location>
</feature>
<feature type="splice variant" id="VSP_003852" description="In isoform 2." evidence="11">
    <original>SQFWVTVQRTEAAERCGLHGSYVLR</original>
    <variation>HVLFRGRPPLPLRPWNLHLPDGTGK</variation>
    <location>
        <begin position="153"/>
        <end position="177"/>
    </location>
</feature>
<feature type="splice variant" id="VSP_003853" description="In isoform 2." evidence="11">
    <location>
        <begin position="178"/>
        <end position="481"/>
    </location>
</feature>
<feature type="mutagenesis site" description="No association with NCK. No association with GAP; when associated with F-398." evidence="5">
    <original>Y</original>
    <variation>F</variation>
    <location>
        <position position="362"/>
    </location>
</feature>
<feature type="mutagenesis site" description="No association with GAP; when associated with F-362." evidence="5">
    <original>Y</original>
    <variation>F</variation>
    <location>
        <position position="398"/>
    </location>
</feature>
<feature type="sequence conflict" description="In Ref. 3; AAB88182." evidence="12" ref="3">
    <original>MDGAVMEGPLFLQSQRFGTK</original>
    <variation>RLPAQASATREREPRWSPFQ</variation>
    <location>
        <begin position="1"/>
        <end position="20"/>
    </location>
</feature>
<feature type="strand" evidence="19">
    <location>
        <begin position="153"/>
        <end position="159"/>
    </location>
</feature>
<feature type="helix" evidence="19">
    <location>
        <begin position="163"/>
        <end position="167"/>
    </location>
</feature>
<feature type="strand" evidence="19">
    <location>
        <begin position="172"/>
        <end position="178"/>
    </location>
</feature>
<feature type="strand" evidence="19">
    <location>
        <begin position="180"/>
        <end position="188"/>
    </location>
</feature>
<feature type="turn" evidence="19">
    <location>
        <begin position="190"/>
        <end position="192"/>
    </location>
</feature>
<feature type="strand" evidence="19">
    <location>
        <begin position="195"/>
        <end position="202"/>
    </location>
</feature>
<feature type="helix" evidence="19">
    <location>
        <begin position="203"/>
        <end position="205"/>
    </location>
</feature>
<feature type="strand" evidence="19">
    <location>
        <begin position="206"/>
        <end position="211"/>
    </location>
</feature>
<feature type="strand" evidence="19">
    <location>
        <begin position="213"/>
        <end position="220"/>
    </location>
</feature>
<feature type="strand" evidence="19">
    <location>
        <begin position="228"/>
        <end position="234"/>
    </location>
</feature>
<feature type="helix" evidence="19">
    <location>
        <begin position="238"/>
        <end position="251"/>
    </location>
</feature>
<feature type="modified residue" description="N-acetylmethionine" evidence="8">
    <location sequence="Q99704-3">
        <position position="1"/>
    </location>
</feature>
<comment type="function">
    <text evidence="7">DOK proteins are enzymatically inert adaptor or scaffolding proteins. They provide a docking platform for the assembly of multimolecular signaling complexes. DOK1 appears to be a negative regulator of the insulin signaling pathway. Modulates integrin activation by competing with talin for the same binding site on ITGB3.</text>
</comment>
<comment type="subunit">
    <text evidence="1 7 9">Interacts with ABL1 (By similarity). Interacts with RasGAP and INPP5D/SHIP1. Interacts directly with phosphorylated ITGB3. Interacts with SRMS (via the SH2 and SH3 domains).</text>
</comment>
<comment type="interaction">
    <interactant intactId="EBI-1384360">
        <id>Q99704</id>
    </interactant>
    <interactant intactId="EBI-641062">
        <id>P04626</id>
        <label>ERBB2</label>
    </interactant>
    <organismsDiffer>false</organismsDiffer>
    <experiments>2</experiments>
</comment>
<comment type="interaction">
    <interactant intactId="EBI-1384360">
        <id>Q99704</id>
    </interactant>
    <interactant intactId="EBI-8541270">
        <id>Q9H3Y6</id>
        <label>SRMS</label>
    </interactant>
    <organismsDiffer>false</organismsDiffer>
    <experiments>7</experiments>
</comment>
<comment type="interaction">
    <interactant intactId="EBI-1384360">
        <id>Q99704</id>
    </interactant>
    <interactant intactId="EBI-7644904">
        <id>Q9JIY2</id>
        <label>Cbll1</label>
    </interactant>
    <organismsDiffer>true</organismsDiffer>
    <experiments>2</experiments>
</comment>
<comment type="interaction">
    <interactant intactId="EBI-1384360">
        <id>Q99704</id>
    </interactant>
    <interactant intactId="EBI-6248094">
        <id>Q9Q2G4</id>
        <label>ORF</label>
    </interactant>
    <organismsDiffer>true</organismsDiffer>
    <experiments>2</experiments>
</comment>
<comment type="subcellular location">
    <molecule>Isoform 1</molecule>
    <subcellularLocation>
        <location>Cytoplasm</location>
    </subcellularLocation>
    <subcellularLocation>
        <location>Nucleus</location>
    </subcellularLocation>
</comment>
<comment type="subcellular location">
    <molecule>Isoform 3</molecule>
    <subcellularLocation>
        <location>Cytoplasm</location>
        <location>Perinuclear region</location>
    </subcellularLocation>
</comment>
<comment type="alternative products">
    <event type="alternative splicing"/>
    <event type="alternative initiation"/>
    <isoform>
        <id>Q99704-1</id>
        <name>1</name>
        <name>p62Dok1</name>
        <sequence type="displayed"/>
    </isoform>
    <isoform>
        <id>Q99704-2</id>
        <name>2</name>
        <name>p22Dokdel</name>
        <sequence type="described" ref="VSP_003852 VSP_003853"/>
    </isoform>
    <isoform>
        <id>Q99704-3</id>
        <name>3</name>
        <name>p44Dok</name>
        <sequence type="described" ref="VSP_038224"/>
    </isoform>
</comment>
<comment type="tissue specificity">
    <text evidence="6">Expressed in pancreas, heart, leukocyte and spleen. Expressed in both resting and activated peripheral blood T-cells. Expressed in breast cancer.</text>
</comment>
<comment type="domain">
    <text>The PTB domain mediates receptor interaction.</text>
</comment>
<comment type="PTM">
    <text evidence="1 5 9 10">Constitutively tyrosine-phosphorylated. Phosphorylated by TEC (By similarity). Phosphorylated by LYN (By similarity). Phosphorylated on tyrosine residues by the insulin receptor kinase. Results in the negative regulation of the insulin signaling pathway. Phosphorylated on tyrosine residues by SRMS.</text>
</comment>
<comment type="miscellaneous">
    <molecule>Isoform 3</molecule>
    <text evidence="12">Produced by alternative initiation at Met-140 of isoform 1.</text>
</comment>
<comment type="similarity">
    <text evidence="12">Belongs to the DOK family. Type A subfamily.</text>
</comment>